<feature type="chain" id="PRO_0000342967" description="Probable calcium-binding protein CML44">
    <location>
        <begin position="1"/>
        <end position="155"/>
    </location>
</feature>
<feature type="domain" description="EF-hand 1" evidence="2">
    <location>
        <begin position="6"/>
        <end position="41"/>
    </location>
</feature>
<feature type="domain" description="EF-hand 2" evidence="2">
    <location>
        <begin position="85"/>
        <end position="120"/>
    </location>
</feature>
<feature type="domain" description="EF-hand 3" evidence="2">
    <location>
        <begin position="130"/>
        <end position="155"/>
    </location>
</feature>
<feature type="binding site" evidence="2">
    <location>
        <position position="19"/>
    </location>
    <ligand>
        <name>Ca(2+)</name>
        <dbReference type="ChEBI" id="CHEBI:29108"/>
        <label>1</label>
    </ligand>
</feature>
<feature type="binding site" evidence="2">
    <location>
        <position position="21"/>
    </location>
    <ligand>
        <name>Ca(2+)</name>
        <dbReference type="ChEBI" id="CHEBI:29108"/>
        <label>1</label>
    </ligand>
</feature>
<feature type="binding site" evidence="2">
    <location>
        <position position="23"/>
    </location>
    <ligand>
        <name>Ca(2+)</name>
        <dbReference type="ChEBI" id="CHEBI:29108"/>
        <label>1</label>
    </ligand>
</feature>
<feature type="binding site" evidence="2">
    <location>
        <position position="30"/>
    </location>
    <ligand>
        <name>Ca(2+)</name>
        <dbReference type="ChEBI" id="CHEBI:29108"/>
        <label>1</label>
    </ligand>
</feature>
<feature type="binding site" evidence="2">
    <location>
        <position position="98"/>
    </location>
    <ligand>
        <name>Ca(2+)</name>
        <dbReference type="ChEBI" id="CHEBI:29108"/>
        <label>2</label>
    </ligand>
</feature>
<feature type="binding site" evidence="2">
    <location>
        <position position="100"/>
    </location>
    <ligand>
        <name>Ca(2+)</name>
        <dbReference type="ChEBI" id="CHEBI:29108"/>
        <label>2</label>
    </ligand>
</feature>
<feature type="binding site" evidence="2">
    <location>
        <position position="102"/>
    </location>
    <ligand>
        <name>Ca(2+)</name>
        <dbReference type="ChEBI" id="CHEBI:29108"/>
        <label>2</label>
    </ligand>
</feature>
<feature type="binding site" evidence="2">
    <location>
        <position position="104"/>
    </location>
    <ligand>
        <name>Ca(2+)</name>
        <dbReference type="ChEBI" id="CHEBI:29108"/>
        <label>2</label>
    </ligand>
</feature>
<feature type="binding site" evidence="2">
    <location>
        <position position="109"/>
    </location>
    <ligand>
        <name>Ca(2+)</name>
        <dbReference type="ChEBI" id="CHEBI:29108"/>
        <label>2</label>
    </ligand>
</feature>
<comment type="function">
    <text evidence="1">Potential calcium sensor.</text>
</comment>
<comment type="caution">
    <text evidence="3">Although assigned as a calmodulin family member by Ref.4, it only contains EF-hand domains.</text>
</comment>
<comment type="sequence caution" evidence="3">
    <conflict type="erroneous initiation">
        <sequence resource="EMBL-CDS" id="AAF87905"/>
    </conflict>
</comment>
<comment type="sequence caution" evidence="3">
    <conflict type="erroneous initiation">
        <sequence resource="EMBL-CDS" id="AAK32762"/>
    </conflict>
</comment>
<gene>
    <name type="primary">CML44</name>
    <name type="ordered locus">At1g21550</name>
    <name type="ORF">F24J8.15</name>
</gene>
<keyword id="KW-0106">Calcium</keyword>
<keyword id="KW-0479">Metal-binding</keyword>
<keyword id="KW-1185">Reference proteome</keyword>
<keyword id="KW-0677">Repeat</keyword>
<evidence type="ECO:0000250" key="1"/>
<evidence type="ECO:0000255" key="2">
    <source>
        <dbReference type="PROSITE-ProRule" id="PRU00448"/>
    </source>
</evidence>
<evidence type="ECO:0000305" key="3"/>
<accession>Q9LPK5</accession>
<organism>
    <name type="scientific">Arabidopsis thaliana</name>
    <name type="common">Mouse-ear cress</name>
    <dbReference type="NCBI Taxonomy" id="3702"/>
    <lineage>
        <taxon>Eukaryota</taxon>
        <taxon>Viridiplantae</taxon>
        <taxon>Streptophyta</taxon>
        <taxon>Embryophyta</taxon>
        <taxon>Tracheophyta</taxon>
        <taxon>Spermatophyta</taxon>
        <taxon>Magnoliopsida</taxon>
        <taxon>eudicotyledons</taxon>
        <taxon>Gunneridae</taxon>
        <taxon>Pentapetalae</taxon>
        <taxon>rosids</taxon>
        <taxon>malvids</taxon>
        <taxon>Brassicales</taxon>
        <taxon>Brassicaceae</taxon>
        <taxon>Camelineae</taxon>
        <taxon>Arabidopsis</taxon>
    </lineage>
</organism>
<reference key="1">
    <citation type="journal article" date="2000" name="Nature">
        <title>Sequence and analysis of chromosome 1 of the plant Arabidopsis thaliana.</title>
        <authorList>
            <person name="Theologis A."/>
            <person name="Ecker J.R."/>
            <person name="Palm C.J."/>
            <person name="Federspiel N.A."/>
            <person name="Kaul S."/>
            <person name="White O."/>
            <person name="Alonso J."/>
            <person name="Altafi H."/>
            <person name="Araujo R."/>
            <person name="Bowman C.L."/>
            <person name="Brooks S.Y."/>
            <person name="Buehler E."/>
            <person name="Chan A."/>
            <person name="Chao Q."/>
            <person name="Chen H."/>
            <person name="Cheuk R.F."/>
            <person name="Chin C.W."/>
            <person name="Chung M.K."/>
            <person name="Conn L."/>
            <person name="Conway A.B."/>
            <person name="Conway A.R."/>
            <person name="Creasy T.H."/>
            <person name="Dewar K."/>
            <person name="Dunn P."/>
            <person name="Etgu P."/>
            <person name="Feldblyum T.V."/>
            <person name="Feng J.-D."/>
            <person name="Fong B."/>
            <person name="Fujii C.Y."/>
            <person name="Gill J.E."/>
            <person name="Goldsmith A.D."/>
            <person name="Haas B."/>
            <person name="Hansen N.F."/>
            <person name="Hughes B."/>
            <person name="Huizar L."/>
            <person name="Hunter J.L."/>
            <person name="Jenkins J."/>
            <person name="Johnson-Hopson C."/>
            <person name="Khan S."/>
            <person name="Khaykin E."/>
            <person name="Kim C.J."/>
            <person name="Koo H.L."/>
            <person name="Kremenetskaia I."/>
            <person name="Kurtz D.B."/>
            <person name="Kwan A."/>
            <person name="Lam B."/>
            <person name="Langin-Hooper S."/>
            <person name="Lee A."/>
            <person name="Lee J.M."/>
            <person name="Lenz C.A."/>
            <person name="Li J.H."/>
            <person name="Li Y.-P."/>
            <person name="Lin X."/>
            <person name="Liu S.X."/>
            <person name="Liu Z.A."/>
            <person name="Luros J.S."/>
            <person name="Maiti R."/>
            <person name="Marziali A."/>
            <person name="Militscher J."/>
            <person name="Miranda M."/>
            <person name="Nguyen M."/>
            <person name="Nierman W.C."/>
            <person name="Osborne B.I."/>
            <person name="Pai G."/>
            <person name="Peterson J."/>
            <person name="Pham P.K."/>
            <person name="Rizzo M."/>
            <person name="Rooney T."/>
            <person name="Rowley D."/>
            <person name="Sakano H."/>
            <person name="Salzberg S.L."/>
            <person name="Schwartz J.R."/>
            <person name="Shinn P."/>
            <person name="Southwick A.M."/>
            <person name="Sun H."/>
            <person name="Tallon L.J."/>
            <person name="Tambunga G."/>
            <person name="Toriumi M.J."/>
            <person name="Town C.D."/>
            <person name="Utterback T."/>
            <person name="Van Aken S."/>
            <person name="Vaysberg M."/>
            <person name="Vysotskaia V.S."/>
            <person name="Walker M."/>
            <person name="Wu D."/>
            <person name="Yu G."/>
            <person name="Fraser C.M."/>
            <person name="Venter J.C."/>
            <person name="Davis R.W."/>
        </authorList>
    </citation>
    <scope>NUCLEOTIDE SEQUENCE [LARGE SCALE GENOMIC DNA]</scope>
    <source>
        <strain>cv. Columbia</strain>
    </source>
</reference>
<reference key="2">
    <citation type="journal article" date="2017" name="Plant J.">
        <title>Araport11: a complete reannotation of the Arabidopsis thaliana reference genome.</title>
        <authorList>
            <person name="Cheng C.Y."/>
            <person name="Krishnakumar V."/>
            <person name="Chan A.P."/>
            <person name="Thibaud-Nissen F."/>
            <person name="Schobel S."/>
            <person name="Town C.D."/>
        </authorList>
    </citation>
    <scope>GENOME REANNOTATION</scope>
    <source>
        <strain>cv. Columbia</strain>
    </source>
</reference>
<reference key="3">
    <citation type="journal article" date="2003" name="Science">
        <title>Empirical analysis of transcriptional activity in the Arabidopsis genome.</title>
        <authorList>
            <person name="Yamada K."/>
            <person name="Lim J."/>
            <person name="Dale J.M."/>
            <person name="Chen H."/>
            <person name="Shinn P."/>
            <person name="Palm C.J."/>
            <person name="Southwick A.M."/>
            <person name="Wu H.C."/>
            <person name="Kim C.J."/>
            <person name="Nguyen M."/>
            <person name="Pham P.K."/>
            <person name="Cheuk R.F."/>
            <person name="Karlin-Newmann G."/>
            <person name="Liu S.X."/>
            <person name="Lam B."/>
            <person name="Sakano H."/>
            <person name="Wu T."/>
            <person name="Yu G."/>
            <person name="Miranda M."/>
            <person name="Quach H.L."/>
            <person name="Tripp M."/>
            <person name="Chang C.H."/>
            <person name="Lee J.M."/>
            <person name="Toriumi M.J."/>
            <person name="Chan M.M."/>
            <person name="Tang C.C."/>
            <person name="Onodera C.S."/>
            <person name="Deng J.M."/>
            <person name="Akiyama K."/>
            <person name="Ansari Y."/>
            <person name="Arakawa T."/>
            <person name="Banh J."/>
            <person name="Banno F."/>
            <person name="Bowser L."/>
            <person name="Brooks S.Y."/>
            <person name="Carninci P."/>
            <person name="Chao Q."/>
            <person name="Choy N."/>
            <person name="Enju A."/>
            <person name="Goldsmith A.D."/>
            <person name="Gurjal M."/>
            <person name="Hansen N.F."/>
            <person name="Hayashizaki Y."/>
            <person name="Johnson-Hopson C."/>
            <person name="Hsuan V.W."/>
            <person name="Iida K."/>
            <person name="Karnes M."/>
            <person name="Khan S."/>
            <person name="Koesema E."/>
            <person name="Ishida J."/>
            <person name="Jiang P.X."/>
            <person name="Jones T."/>
            <person name="Kawai J."/>
            <person name="Kamiya A."/>
            <person name="Meyers C."/>
            <person name="Nakajima M."/>
            <person name="Narusaka M."/>
            <person name="Seki M."/>
            <person name="Sakurai T."/>
            <person name="Satou M."/>
            <person name="Tamse R."/>
            <person name="Vaysberg M."/>
            <person name="Wallender E.K."/>
            <person name="Wong C."/>
            <person name="Yamamura Y."/>
            <person name="Yuan S."/>
            <person name="Shinozaki K."/>
            <person name="Davis R.W."/>
            <person name="Theologis A."/>
            <person name="Ecker J.R."/>
        </authorList>
    </citation>
    <scope>NUCLEOTIDE SEQUENCE [LARGE SCALE MRNA]</scope>
    <source>
        <strain>cv. Columbia</strain>
    </source>
</reference>
<reference key="4">
    <citation type="journal article" date="2003" name="New Phytol.">
        <title>Calmodulins and related potential calcium sensors of Arabidopsis.</title>
        <authorList>
            <person name="McCormack E."/>
            <person name="Braam J."/>
        </authorList>
    </citation>
    <scope>GENE FAMILY</scope>
    <scope>NOMENCLATURE</scope>
</reference>
<dbReference type="EMBL" id="AC015447">
    <property type="protein sequence ID" value="AAF87905.1"/>
    <property type="status" value="ALT_INIT"/>
    <property type="molecule type" value="Genomic_DNA"/>
</dbReference>
<dbReference type="EMBL" id="CP002684">
    <property type="protein sequence ID" value="AEE30116.1"/>
    <property type="molecule type" value="Genomic_DNA"/>
</dbReference>
<dbReference type="EMBL" id="AF361594">
    <property type="protein sequence ID" value="AAK32762.1"/>
    <property type="status" value="ALT_INIT"/>
    <property type="molecule type" value="mRNA"/>
</dbReference>
<dbReference type="EMBL" id="AY133593">
    <property type="protein sequence ID" value="AAM91423.1"/>
    <property type="molecule type" value="mRNA"/>
</dbReference>
<dbReference type="PIR" id="D86348">
    <property type="entry name" value="D86348"/>
</dbReference>
<dbReference type="RefSeq" id="NP_564143.1">
    <property type="nucleotide sequence ID" value="NM_102004.3"/>
</dbReference>
<dbReference type="SMR" id="Q9LPK5"/>
<dbReference type="FunCoup" id="Q9LPK5">
    <property type="interactions" value="208"/>
</dbReference>
<dbReference type="IntAct" id="Q9LPK5">
    <property type="interactions" value="1"/>
</dbReference>
<dbReference type="STRING" id="3702.Q9LPK5"/>
<dbReference type="PaxDb" id="3702-AT1G21550.1"/>
<dbReference type="ProteomicsDB" id="241082"/>
<dbReference type="EnsemblPlants" id="AT1G21550.1">
    <property type="protein sequence ID" value="AT1G21550.1"/>
    <property type="gene ID" value="AT1G21550"/>
</dbReference>
<dbReference type="GeneID" id="838756"/>
<dbReference type="Gramene" id="AT1G21550.1">
    <property type="protein sequence ID" value="AT1G21550.1"/>
    <property type="gene ID" value="AT1G21550"/>
</dbReference>
<dbReference type="KEGG" id="ath:AT1G21550"/>
<dbReference type="Araport" id="AT1G21550"/>
<dbReference type="TAIR" id="AT1G21550"/>
<dbReference type="eggNOG" id="KOG0027">
    <property type="taxonomic scope" value="Eukaryota"/>
</dbReference>
<dbReference type="HOGENOM" id="CLU_061288_20_3_1"/>
<dbReference type="InParanoid" id="Q9LPK5"/>
<dbReference type="OMA" id="IRMVHGG"/>
<dbReference type="OrthoDB" id="26525at2759"/>
<dbReference type="PhylomeDB" id="Q9LPK5"/>
<dbReference type="PRO" id="PR:Q9LPK5"/>
<dbReference type="Proteomes" id="UP000006548">
    <property type="component" value="Chromosome 1"/>
</dbReference>
<dbReference type="ExpressionAtlas" id="Q9LPK5">
    <property type="expression patterns" value="baseline and differential"/>
</dbReference>
<dbReference type="GO" id="GO:0005509">
    <property type="term" value="F:calcium ion binding"/>
    <property type="evidence" value="ECO:0007669"/>
    <property type="project" value="InterPro"/>
</dbReference>
<dbReference type="GO" id="GO:0071456">
    <property type="term" value="P:cellular response to hypoxia"/>
    <property type="evidence" value="ECO:0007007"/>
    <property type="project" value="TAIR"/>
</dbReference>
<dbReference type="CDD" id="cd00051">
    <property type="entry name" value="EFh"/>
    <property type="match status" value="1"/>
</dbReference>
<dbReference type="FunFam" id="1.10.238.10:FF:000003">
    <property type="entry name" value="Calmodulin A"/>
    <property type="match status" value="1"/>
</dbReference>
<dbReference type="Gene3D" id="1.10.238.10">
    <property type="entry name" value="EF-hand"/>
    <property type="match status" value="2"/>
</dbReference>
<dbReference type="InterPro" id="IPR011992">
    <property type="entry name" value="EF-hand-dom_pair"/>
</dbReference>
<dbReference type="InterPro" id="IPR018247">
    <property type="entry name" value="EF_Hand_1_Ca_BS"/>
</dbReference>
<dbReference type="InterPro" id="IPR002048">
    <property type="entry name" value="EF_hand_dom"/>
</dbReference>
<dbReference type="InterPro" id="IPR039647">
    <property type="entry name" value="EF_hand_pair_protein_CML-like"/>
</dbReference>
<dbReference type="PANTHER" id="PTHR10891">
    <property type="entry name" value="EF-HAND CALCIUM-BINDING DOMAIN CONTAINING PROTEIN"/>
    <property type="match status" value="1"/>
</dbReference>
<dbReference type="Pfam" id="PF00036">
    <property type="entry name" value="EF-hand_1"/>
    <property type="match status" value="1"/>
</dbReference>
<dbReference type="Pfam" id="PF13499">
    <property type="entry name" value="EF-hand_7"/>
    <property type="match status" value="1"/>
</dbReference>
<dbReference type="SMART" id="SM00054">
    <property type="entry name" value="EFh"/>
    <property type="match status" value="3"/>
</dbReference>
<dbReference type="SUPFAM" id="SSF47473">
    <property type="entry name" value="EF-hand"/>
    <property type="match status" value="1"/>
</dbReference>
<dbReference type="PROSITE" id="PS00018">
    <property type="entry name" value="EF_HAND_1"/>
    <property type="match status" value="2"/>
</dbReference>
<dbReference type="PROSITE" id="PS50222">
    <property type="entry name" value="EF_HAND_2"/>
    <property type="match status" value="3"/>
</dbReference>
<sequence>MDCSFITTNDLRRMFKTLDKNQDGLVTLDELLWILDKLGWAEHTPDELELIVGKQSLDLDEFLRFYYDAVLDSKGSKKNIDVVADNDEAIARAFNVFDVNGDGYISAEELRDVLERLGFEEEAKAWDCGRMIRVHDKNLDGFVDFEEFKNMILHV</sequence>
<protein>
    <recommendedName>
        <fullName>Probable calcium-binding protein CML44</fullName>
    </recommendedName>
    <alternativeName>
        <fullName>Calmodulin-like protein 44</fullName>
    </alternativeName>
</protein>
<name>CML44_ARATH</name>
<proteinExistence type="evidence at transcript level"/>